<proteinExistence type="inferred from homology"/>
<reference key="1">
    <citation type="journal article" date="2009" name="Environ. Microbiol.">
        <title>Contribution of mobile genetic elements to Desulfovibrio vulgaris genome plasticity.</title>
        <authorList>
            <person name="Walker C.B."/>
            <person name="Stolyar S."/>
            <person name="Chivian D."/>
            <person name="Pinel N."/>
            <person name="Gabster J.A."/>
            <person name="Dehal P.S."/>
            <person name="He Z."/>
            <person name="Yang Z.K."/>
            <person name="Yen H.C."/>
            <person name="Zhou J."/>
            <person name="Wall J.D."/>
            <person name="Hazen T.C."/>
            <person name="Arkin A.P."/>
            <person name="Stahl D.A."/>
        </authorList>
    </citation>
    <scope>NUCLEOTIDE SEQUENCE [LARGE SCALE GENOMIC DNA]</scope>
    <source>
        <strain>DP4</strain>
    </source>
</reference>
<organism>
    <name type="scientific">Nitratidesulfovibrio vulgaris (strain DP4)</name>
    <name type="common">Desulfovibrio vulgaris</name>
    <dbReference type="NCBI Taxonomy" id="391774"/>
    <lineage>
        <taxon>Bacteria</taxon>
        <taxon>Pseudomonadati</taxon>
        <taxon>Thermodesulfobacteriota</taxon>
        <taxon>Desulfovibrionia</taxon>
        <taxon>Desulfovibrionales</taxon>
        <taxon>Desulfovibrionaceae</taxon>
        <taxon>Nitratidesulfovibrio</taxon>
    </lineage>
</organism>
<name>RL16_NITV4</name>
<keyword id="KW-0687">Ribonucleoprotein</keyword>
<keyword id="KW-0689">Ribosomal protein</keyword>
<keyword id="KW-0694">RNA-binding</keyword>
<keyword id="KW-0699">rRNA-binding</keyword>
<keyword id="KW-0820">tRNA-binding</keyword>
<protein>
    <recommendedName>
        <fullName evidence="1">Large ribosomal subunit protein uL16</fullName>
    </recommendedName>
    <alternativeName>
        <fullName evidence="2">50S ribosomal protein L16</fullName>
    </alternativeName>
</protein>
<comment type="function">
    <text evidence="1">Binds 23S rRNA and is also seen to make contacts with the A and possibly P site tRNAs.</text>
</comment>
<comment type="subunit">
    <text evidence="1">Part of the 50S ribosomal subunit.</text>
</comment>
<comment type="similarity">
    <text evidence="1">Belongs to the universal ribosomal protein uL16 family.</text>
</comment>
<evidence type="ECO:0000255" key="1">
    <source>
        <dbReference type="HAMAP-Rule" id="MF_01342"/>
    </source>
</evidence>
<evidence type="ECO:0000305" key="2"/>
<dbReference type="EMBL" id="CP000527">
    <property type="protein sequence ID" value="ABM28775.1"/>
    <property type="molecule type" value="Genomic_DNA"/>
</dbReference>
<dbReference type="RefSeq" id="WP_010938605.1">
    <property type="nucleotide sequence ID" value="NC_008751.1"/>
</dbReference>
<dbReference type="SMR" id="A1VEA9"/>
<dbReference type="KEGG" id="dvl:Dvul_1758"/>
<dbReference type="HOGENOM" id="CLU_078858_2_1_7"/>
<dbReference type="Proteomes" id="UP000009173">
    <property type="component" value="Chromosome"/>
</dbReference>
<dbReference type="GO" id="GO:0022625">
    <property type="term" value="C:cytosolic large ribosomal subunit"/>
    <property type="evidence" value="ECO:0007669"/>
    <property type="project" value="TreeGrafter"/>
</dbReference>
<dbReference type="GO" id="GO:0019843">
    <property type="term" value="F:rRNA binding"/>
    <property type="evidence" value="ECO:0007669"/>
    <property type="project" value="UniProtKB-UniRule"/>
</dbReference>
<dbReference type="GO" id="GO:0003735">
    <property type="term" value="F:structural constituent of ribosome"/>
    <property type="evidence" value="ECO:0007669"/>
    <property type="project" value="InterPro"/>
</dbReference>
<dbReference type="GO" id="GO:0000049">
    <property type="term" value="F:tRNA binding"/>
    <property type="evidence" value="ECO:0007669"/>
    <property type="project" value="UniProtKB-KW"/>
</dbReference>
<dbReference type="GO" id="GO:0006412">
    <property type="term" value="P:translation"/>
    <property type="evidence" value="ECO:0007669"/>
    <property type="project" value="UniProtKB-UniRule"/>
</dbReference>
<dbReference type="CDD" id="cd01433">
    <property type="entry name" value="Ribosomal_L16_L10e"/>
    <property type="match status" value="1"/>
</dbReference>
<dbReference type="FunFam" id="3.90.1170.10:FF:000001">
    <property type="entry name" value="50S ribosomal protein L16"/>
    <property type="match status" value="1"/>
</dbReference>
<dbReference type="Gene3D" id="3.90.1170.10">
    <property type="entry name" value="Ribosomal protein L10e/L16"/>
    <property type="match status" value="1"/>
</dbReference>
<dbReference type="HAMAP" id="MF_01342">
    <property type="entry name" value="Ribosomal_uL16"/>
    <property type="match status" value="1"/>
</dbReference>
<dbReference type="InterPro" id="IPR047873">
    <property type="entry name" value="Ribosomal_uL16"/>
</dbReference>
<dbReference type="InterPro" id="IPR000114">
    <property type="entry name" value="Ribosomal_uL16_bact-type"/>
</dbReference>
<dbReference type="InterPro" id="IPR020798">
    <property type="entry name" value="Ribosomal_uL16_CS"/>
</dbReference>
<dbReference type="InterPro" id="IPR016180">
    <property type="entry name" value="Ribosomal_uL16_dom"/>
</dbReference>
<dbReference type="InterPro" id="IPR036920">
    <property type="entry name" value="Ribosomal_uL16_sf"/>
</dbReference>
<dbReference type="NCBIfam" id="TIGR01164">
    <property type="entry name" value="rplP_bact"/>
    <property type="match status" value="1"/>
</dbReference>
<dbReference type="PANTHER" id="PTHR12220">
    <property type="entry name" value="50S/60S RIBOSOMAL PROTEIN L16"/>
    <property type="match status" value="1"/>
</dbReference>
<dbReference type="PANTHER" id="PTHR12220:SF13">
    <property type="entry name" value="LARGE RIBOSOMAL SUBUNIT PROTEIN UL16M"/>
    <property type="match status" value="1"/>
</dbReference>
<dbReference type="Pfam" id="PF00252">
    <property type="entry name" value="Ribosomal_L16"/>
    <property type="match status" value="1"/>
</dbReference>
<dbReference type="PRINTS" id="PR00060">
    <property type="entry name" value="RIBOSOMALL16"/>
</dbReference>
<dbReference type="SUPFAM" id="SSF54686">
    <property type="entry name" value="Ribosomal protein L16p/L10e"/>
    <property type="match status" value="1"/>
</dbReference>
<dbReference type="PROSITE" id="PS00586">
    <property type="entry name" value="RIBOSOMAL_L16_1"/>
    <property type="match status" value="1"/>
</dbReference>
<gene>
    <name evidence="1" type="primary">rplP</name>
    <name type="ordered locus">Dvul_1758</name>
</gene>
<sequence length="137" mass="15056">MLSPRKVKFRKWQKGRNKGVATRGATVAFGDIGLKAIEHGKLTSQQIEAARIAMMRHIKRGGKVWIRIFPDRPVTAKPLETRQGSGKGSPVGWCAPVKPGRVLYEIKGVSLELAKEALTRAAHKLPVKTVIVVREGV</sequence>
<feature type="chain" id="PRO_1000054615" description="Large ribosomal subunit protein uL16">
    <location>
        <begin position="1"/>
        <end position="137"/>
    </location>
</feature>
<accession>A1VEA9</accession>